<accession>P00466</accession>
<accession>P09770</accession>
<gene>
    <name type="primary">nifD</name>
</gene>
<protein>
    <recommendedName>
        <fullName>Nitrogenase molybdenum-iron protein alpha chain</fullName>
        <ecNumber>1.18.6.1</ecNumber>
    </recommendedName>
    <alternativeName>
        <fullName>Dinitrogenase</fullName>
    </alternativeName>
    <alternativeName>
        <fullName>Nitrogenase component I</fullName>
    </alternativeName>
</protein>
<comment type="function">
    <text>This molybdenum-iron protein is part of the nitrogenase complex that catalyzes the key enzymatic reactions in nitrogen fixation.</text>
</comment>
<comment type="catalytic activity">
    <reaction>
        <text>N2 + 8 reduced [2Fe-2S]-[ferredoxin] + 16 ATP + 16 H2O = H2 + 8 oxidized [2Fe-2S]-[ferredoxin] + 2 NH4(+) + 16 ADP + 16 phosphate + 6 H(+)</text>
        <dbReference type="Rhea" id="RHEA:21448"/>
        <dbReference type="Rhea" id="RHEA-COMP:10000"/>
        <dbReference type="Rhea" id="RHEA-COMP:10001"/>
        <dbReference type="ChEBI" id="CHEBI:15377"/>
        <dbReference type="ChEBI" id="CHEBI:15378"/>
        <dbReference type="ChEBI" id="CHEBI:17997"/>
        <dbReference type="ChEBI" id="CHEBI:18276"/>
        <dbReference type="ChEBI" id="CHEBI:28938"/>
        <dbReference type="ChEBI" id="CHEBI:30616"/>
        <dbReference type="ChEBI" id="CHEBI:33737"/>
        <dbReference type="ChEBI" id="CHEBI:33738"/>
        <dbReference type="ChEBI" id="CHEBI:43474"/>
        <dbReference type="ChEBI" id="CHEBI:456216"/>
        <dbReference type="EC" id="1.18.6.1"/>
    </reaction>
</comment>
<comment type="cofactor">
    <cofactor>
        <name>[8Fe-7S] cluster</name>
        <dbReference type="ChEBI" id="CHEBI:21143"/>
    </cofactor>
    <text>Binds 1 [8Fe-7S] cluster per heterodimer.</text>
</comment>
<comment type="cofactor">
    <cofactor>
        <name>[7Fe-Mo-9S-C-homocitryl] cluster</name>
        <dbReference type="ChEBI" id="CHEBI:30409"/>
    </cofactor>
    <text>Binds 1 [7Fe-Mo-9S-C-homocitryl] cluster per subunit.</text>
</comment>
<comment type="subunit">
    <text evidence="1 2">Tetramer of two alpha and two beta chains. Forms complex with the iron protein (nitrogenase component 2).</text>
</comment>
<comment type="similarity">
    <text evidence="3">Belongs to the NifD/NifK/NifE/NifN family.</text>
</comment>
<comment type="caution">
    <text evidence="3">The authors of PubMed:3211766 originally stated that their sequence was from Frankia sp.</text>
</comment>
<keyword id="KW-0002">3D-structure</keyword>
<keyword id="KW-0067">ATP-binding</keyword>
<keyword id="KW-0408">Iron</keyword>
<keyword id="KW-0411">Iron-sulfur</keyword>
<keyword id="KW-0479">Metal-binding</keyword>
<keyword id="KW-0500">Molybdenum</keyword>
<keyword id="KW-0535">Nitrogen fixation</keyword>
<keyword id="KW-0547">Nucleotide-binding</keyword>
<keyword id="KW-0560">Oxidoreductase</keyword>
<evidence type="ECO:0000269" key="1">
    <source>
    </source>
</evidence>
<evidence type="ECO:0000269" key="2">
    <source>
    </source>
</evidence>
<evidence type="ECO:0000305" key="3"/>
<evidence type="ECO:0007829" key="4">
    <source>
        <dbReference type="PDB" id="1QGU"/>
    </source>
</evidence>
<reference key="1">
    <citation type="journal article" date="1988" name="J. Mol. Biol.">
        <title>Nucleotide sequence of a 24,206-base-pair DNA fragment carrying the entire nitrogen fixation gene cluster of Klebsiella pneumoniae.</title>
        <authorList>
            <person name="Arnold W."/>
            <person name="Rump A."/>
            <person name="Klipp W."/>
            <person name="Priefer U.B."/>
            <person name="Puehler A."/>
        </authorList>
    </citation>
    <scope>NUCLEOTIDE SEQUENCE [GENOMIC DNA]</scope>
</reference>
<reference key="2">
    <citation type="submission" date="1989-01" db="EMBL/GenBank/DDBJ databases">
        <authorList>
            <person name="Arnold W."/>
        </authorList>
    </citation>
    <scope>NUCLEOTIDE SEQUENCE [GENOMIC DNA]</scope>
</reference>
<reference key="3">
    <citation type="journal article" date="1988" name="Nucleic Acids Res.">
        <title>Nucleotide and deduced amino acid sequences of the Klebsiella pneumoniae nifK gene coding for the beta-subunit of nitrogenase MoFe protein.</title>
        <authorList>
            <person name="Steinbauer J."/>
            <person name="Wenzel W."/>
            <person name="Hess D."/>
        </authorList>
    </citation>
    <scope>NUCLEOTIDE SEQUENCE [GENOMIC DNA]</scope>
</reference>
<reference key="4">
    <citation type="journal article" date="1987" name="Biochem. J.">
        <title>Nucleotide sequence of the Klebsiella pneumoniae nifD gene and predicted amino acid sequence of the alpha-subunit of nitrogenase MoFe protein.</title>
        <authorList>
            <person name="Ioannidis I."/>
            <person name="Buck M."/>
        </authorList>
    </citation>
    <scope>NUCLEOTIDE SEQUENCE [GENOMIC DNA]</scope>
    <source>
        <strain>MSAL</strain>
    </source>
</reference>
<reference key="5">
    <citation type="journal article" date="1981" name="J. Mol. Appl. Genet.">
        <title>Biological nitrogen fixation: primary structure of the Klebsiella pneumoniae nifH and nifD genes.</title>
        <authorList>
            <person name="Scott K.F."/>
            <person name="Rolfe B.G."/>
            <person name="Shine J."/>
        </authorList>
    </citation>
    <scope>NUCLEOTIDE SEQUENCE [GENOMIC DNA] OF 1-207</scope>
    <source>
        <strain>UNF 841</strain>
    </source>
</reference>
<reference key="6">
    <citation type="journal article" date="1988" name="Nucleic Acids Res.">
        <title>Nucleotide sequence of nifK and partial sequence of nifD from Frankia species strain FaC1.</title>
        <authorList>
            <person name="Lignon J.M."/>
            <person name="Nakas J.P."/>
        </authorList>
    </citation>
    <scope>NUCLEOTIDE SEQUENCE [GENOMIC DNA] OF 207-483</scope>
</reference>
<reference key="7">
    <citation type="journal article" date="1990" name="Nucleic Acids Res.">
        <authorList>
            <person name="Lignon J.M."/>
            <person name="Nakas J.P."/>
        </authorList>
    </citation>
    <scope>ERRATUM OF PUBMED:3211766</scope>
    <scope>CORRECTION OF ORGANISM GIVEN IN PUBMED:3211766</scope>
</reference>
<reference key="8">
    <citation type="journal article" date="1987" name="Biochem. J.">
        <title>A quantitative approach to sequence comparisons of nitrogenase MoFe protein alpha- and beta-subunits including the newly sequenced nifK gene from Klebsiella pneumoniae.</title>
        <authorList>
            <person name="Holland D."/>
            <person name="Zilberstein A."/>
            <person name="Zamir A."/>
            <person name="Sussman J.L."/>
        </authorList>
    </citation>
    <scope>NUCLEOTIDE SEQUENCE [GENOMIC DNA] OF 452-483</scope>
</reference>
<reference key="9">
    <citation type="journal article" date="1999" name="J. Mol. Biol.">
        <title>New insights into structure-function relationships in nitrogenase: a 1.6 A resolution X-ray crystallographic study of Klebsiella pneumoniae MoFe-protein.</title>
        <authorList>
            <person name="Mayer S.M."/>
            <person name="Lawson D.M."/>
            <person name="Gormal C.A."/>
            <person name="Roe S.M."/>
            <person name="Smith B.E."/>
        </authorList>
    </citation>
    <scope>X-RAY CRYSTALLOGRAPHY (1.6 ANGSTROMS) OF 3-480 IN COMPLEX WITH 8FE-7S CLUSTER AND 7FE-MO-9S-C-HOMOCITRYL CLUSTER</scope>
    <scope>COFACTOR</scope>
    <scope>SUBUNIT</scope>
</reference>
<reference key="10">
    <citation type="journal article" date="2002" name="J. Biol. Chem.">
        <title>Crystallographic analysis of the MoFe protein of nitrogenase from a nifV mutant of Klebsiella pneumoniae identifies citrate as a ligand to the molybdenum of iron molybdenum cofactor (FeMoco).</title>
        <authorList>
            <person name="Mayer S.M."/>
            <person name="Gormal C.A."/>
            <person name="Smith B.E."/>
            <person name="Lawson D.M."/>
        </authorList>
    </citation>
    <scope>X-RAY CRYSTALLOGRAPHY (1.9 ANGSTROMS) OF 3-483 IN COMPLEX WITH 8FE-7S CLUSTER AND 7FE-MO-9S-C-HOMOCITRYL CLUSTER</scope>
    <scope>COFACTOR</scope>
    <scope>SUBUNIT</scope>
</reference>
<feature type="chain" id="PRO_0000153069" description="Nitrogenase molybdenum-iron protein alpha chain">
    <location>
        <begin position="1"/>
        <end position="483"/>
    </location>
</feature>
<feature type="binding site">
    <location>
        <position position="63"/>
    </location>
    <ligand>
        <name>[8Fe-7S] cluster</name>
        <dbReference type="ChEBI" id="CHEBI:21143"/>
        <note>ligand shared with beta chain</note>
    </ligand>
</feature>
<feature type="binding site">
    <location>
        <position position="89"/>
    </location>
    <ligand>
        <name>[8Fe-7S] cluster</name>
        <dbReference type="ChEBI" id="CHEBI:21143"/>
        <note>ligand shared with beta chain</note>
    </ligand>
</feature>
<feature type="binding site">
    <location>
        <position position="155"/>
    </location>
    <ligand>
        <name>[8Fe-7S] cluster</name>
        <dbReference type="ChEBI" id="CHEBI:21143"/>
        <note>ligand shared with beta chain</note>
    </ligand>
</feature>
<feature type="binding site">
    <location>
        <position position="275"/>
    </location>
    <ligand>
        <name>[7Fe-Mo-9S-C-homocitryl] cluster</name>
        <dbReference type="ChEBI" id="CHEBI:30409"/>
    </ligand>
</feature>
<feature type="binding site">
    <location>
        <position position="442"/>
    </location>
    <ligand>
        <name>[7Fe-Mo-9S-C-homocitryl] cluster</name>
        <dbReference type="ChEBI" id="CHEBI:30409"/>
    </ligand>
</feature>
<feature type="sequence conflict" description="In Ref. 4." evidence="3" ref="4">
    <original>E</original>
    <variation>Q</variation>
    <location>
        <position position="16"/>
    </location>
</feature>
<feature type="sequence conflict" description="In Ref. 6; CAA31179." evidence="3" ref="6">
    <original>EMEN</original>
    <variation>GDGD</variation>
    <location>
        <begin position="261"/>
        <end position="264"/>
    </location>
</feature>
<feature type="sequence conflict" description="In Ref. 6; CAA31179." evidence="3" ref="6">
    <original>E</original>
    <variation>D</variation>
    <location>
        <position position="288"/>
    </location>
</feature>
<feature type="sequence conflict" description="In Ref. 6; CAA31179." evidence="3" ref="6">
    <original>KYR</original>
    <variation>NIA</variation>
    <location>
        <begin position="341"/>
        <end position="343"/>
    </location>
</feature>
<feature type="sequence conflict" description="In Ref. 6; CAA31179." evidence="3" ref="6">
    <original>RKVLLYMGGLRPR</original>
    <variation>LRCCSIWRLP</variation>
    <location>
        <begin position="349"/>
        <end position="361"/>
    </location>
</feature>
<feature type="sequence conflict" description="In Ref. 2; CAA31667." evidence="3" ref="2">
    <original>M</original>
    <variation>I</variation>
    <location>
        <position position="355"/>
    </location>
</feature>
<feature type="sequence conflict" description="In Ref. 6; CAA31179." evidence="3" ref="6">
    <original>N</original>
    <variation>T</variation>
    <location>
        <position position="469"/>
    </location>
</feature>
<feature type="helix" evidence="4">
    <location>
        <begin position="5"/>
        <end position="18"/>
    </location>
</feature>
<feature type="helix" evidence="4">
    <location>
        <begin position="23"/>
        <end position="29"/>
    </location>
</feature>
<feature type="helix" evidence="4">
    <location>
        <begin position="30"/>
        <end position="32"/>
    </location>
</feature>
<feature type="strand" evidence="4">
    <location>
        <begin position="33"/>
        <end position="35"/>
    </location>
</feature>
<feature type="helix" evidence="4">
    <location>
        <begin position="44"/>
        <end position="46"/>
    </location>
</feature>
<feature type="helix" evidence="4">
    <location>
        <begin position="64"/>
        <end position="68"/>
    </location>
</feature>
<feature type="helix" evidence="4">
    <location>
        <begin position="69"/>
        <end position="73"/>
    </location>
</feature>
<feature type="strand" evidence="4">
    <location>
        <begin position="79"/>
        <end position="87"/>
    </location>
</feature>
<feature type="helix" evidence="4">
    <location>
        <begin position="88"/>
        <end position="92"/>
    </location>
</feature>
<feature type="turn" evidence="4">
    <location>
        <begin position="93"/>
        <end position="95"/>
    </location>
</feature>
<feature type="turn" evidence="4">
    <location>
        <begin position="105"/>
        <end position="107"/>
    </location>
</feature>
<feature type="helix" evidence="4">
    <location>
        <begin position="121"/>
        <end position="126"/>
    </location>
</feature>
<feature type="helix" evidence="4">
    <location>
        <begin position="129"/>
        <end position="142"/>
    </location>
</feature>
<feature type="strand" evidence="4">
    <location>
        <begin position="147"/>
        <end position="153"/>
    </location>
</feature>
<feature type="helix" evidence="4">
    <location>
        <begin position="156"/>
        <end position="159"/>
    </location>
</feature>
<feature type="helix" evidence="4">
    <location>
        <begin position="164"/>
        <end position="175"/>
    </location>
</feature>
<feature type="strand" evidence="4">
    <location>
        <begin position="179"/>
        <end position="182"/>
    </location>
</feature>
<feature type="strand" evidence="4">
    <location>
        <begin position="188"/>
        <end position="191"/>
    </location>
</feature>
<feature type="helix" evidence="4">
    <location>
        <begin position="192"/>
        <end position="206"/>
    </location>
</feature>
<feature type="turn" evidence="4">
    <location>
        <begin position="207"/>
        <end position="213"/>
    </location>
</feature>
<feature type="strand" evidence="4">
    <location>
        <begin position="222"/>
        <end position="228"/>
    </location>
</feature>
<feature type="turn" evidence="4">
    <location>
        <begin position="232"/>
        <end position="235"/>
    </location>
</feature>
<feature type="helix" evidence="4">
    <location>
        <begin position="236"/>
        <end position="244"/>
    </location>
</feature>
<feature type="strand" evidence="4">
    <location>
        <begin position="248"/>
        <end position="254"/>
    </location>
</feature>
<feature type="helix" evidence="4">
    <location>
        <begin position="259"/>
        <end position="264"/>
    </location>
</feature>
<feature type="helix" evidence="4">
    <location>
        <begin position="265"/>
        <end position="267"/>
    </location>
</feature>
<feature type="strand" evidence="4">
    <location>
        <begin position="269"/>
        <end position="274"/>
    </location>
</feature>
<feature type="helix" evidence="4">
    <location>
        <begin position="276"/>
        <end position="290"/>
    </location>
</feature>
<feature type="strand" evidence="4">
    <location>
        <begin position="294"/>
        <end position="296"/>
    </location>
</feature>
<feature type="helix" evidence="4">
    <location>
        <begin position="301"/>
        <end position="313"/>
    </location>
</feature>
<feature type="helix" evidence="4">
    <location>
        <begin position="318"/>
        <end position="346"/>
    </location>
</feature>
<feature type="strand" evidence="4">
    <location>
        <begin position="350"/>
        <end position="358"/>
    </location>
</feature>
<feature type="helix" evidence="4">
    <location>
        <begin position="359"/>
        <end position="362"/>
    </location>
</feature>
<feature type="helix" evidence="4">
    <location>
        <begin position="364"/>
        <end position="369"/>
    </location>
</feature>
<feature type="strand" evidence="4">
    <location>
        <begin position="373"/>
        <end position="381"/>
    </location>
</feature>
<feature type="helix" evidence="4">
    <location>
        <begin position="384"/>
        <end position="390"/>
    </location>
</feature>
<feature type="helix" evidence="4">
    <location>
        <begin position="391"/>
        <end position="393"/>
    </location>
</feature>
<feature type="strand" evidence="4">
    <location>
        <begin position="399"/>
        <end position="403"/>
    </location>
</feature>
<feature type="helix" evidence="4">
    <location>
        <begin position="406"/>
        <end position="416"/>
    </location>
</feature>
<feature type="strand" evidence="4">
    <location>
        <begin position="419"/>
        <end position="423"/>
    </location>
</feature>
<feature type="helix" evidence="4">
    <location>
        <begin position="425"/>
        <end position="433"/>
    </location>
</feature>
<feature type="strand" evidence="4">
    <location>
        <begin position="438"/>
        <end position="443"/>
    </location>
</feature>
<feature type="helix" evidence="4">
    <location>
        <begin position="444"/>
        <end position="446"/>
    </location>
</feature>
<feature type="helix" evidence="4">
    <location>
        <begin position="452"/>
        <end position="467"/>
    </location>
</feature>
<feature type="helix" evidence="4">
    <location>
        <begin position="470"/>
        <end position="473"/>
    </location>
</feature>
<proteinExistence type="evidence at protein level"/>
<dbReference type="EC" id="1.18.6.1"/>
<dbReference type="EMBL" id="Y00316">
    <property type="protein sequence ID" value="CAA68413.1"/>
    <property type="molecule type" value="Genomic_DNA"/>
</dbReference>
<dbReference type="EMBL" id="X07748">
    <property type="protein sequence ID" value="CAA30571.1"/>
    <property type="molecule type" value="Genomic_DNA"/>
</dbReference>
<dbReference type="EMBL" id="X13303">
    <property type="protein sequence ID" value="CAA31667.1"/>
    <property type="molecule type" value="Genomic_DNA"/>
</dbReference>
<dbReference type="EMBL" id="V00631">
    <property type="protein sequence ID" value="CAA23904.1"/>
    <property type="molecule type" value="Genomic_DNA"/>
</dbReference>
<dbReference type="EMBL" id="X12649">
    <property type="protein sequence ID" value="CAA31179.1"/>
    <property type="molecule type" value="Genomic_DNA"/>
</dbReference>
<dbReference type="EMBL" id="X06243">
    <property type="protein sequence ID" value="CAA29587.1"/>
    <property type="molecule type" value="Genomic_DNA"/>
</dbReference>
<dbReference type="PIR" id="S01729">
    <property type="entry name" value="NIKBMA"/>
</dbReference>
<dbReference type="PDB" id="1H1L">
    <property type="method" value="X-ray"/>
    <property type="resolution" value="1.90 A"/>
    <property type="chains" value="A/C=3-483"/>
</dbReference>
<dbReference type="PDB" id="1QGU">
    <property type="method" value="X-ray"/>
    <property type="resolution" value="1.60 A"/>
    <property type="chains" value="A/C=3-480"/>
</dbReference>
<dbReference type="PDB" id="1QH1">
    <property type="method" value="X-ray"/>
    <property type="resolution" value="1.60 A"/>
    <property type="chains" value="A/C=3-480"/>
</dbReference>
<dbReference type="PDB" id="1QH8">
    <property type="method" value="X-ray"/>
    <property type="resolution" value="1.60 A"/>
    <property type="chains" value="A/C=3-480"/>
</dbReference>
<dbReference type="PDBsum" id="1H1L"/>
<dbReference type="PDBsum" id="1QGU"/>
<dbReference type="PDBsum" id="1QH1"/>
<dbReference type="PDBsum" id="1QH8"/>
<dbReference type="SMR" id="P00466"/>
<dbReference type="DIP" id="DIP-6206N"/>
<dbReference type="BioCyc" id="MetaCyc:NIFDKLEB-MONOMER"/>
<dbReference type="BRENDA" id="1.18.6.1">
    <property type="organism ID" value="2814"/>
</dbReference>
<dbReference type="EvolutionaryTrace" id="P00466"/>
<dbReference type="GO" id="GO:0016612">
    <property type="term" value="C:molybdenum-iron nitrogenase complex"/>
    <property type="evidence" value="ECO:0007669"/>
    <property type="project" value="InterPro"/>
</dbReference>
<dbReference type="GO" id="GO:0005524">
    <property type="term" value="F:ATP binding"/>
    <property type="evidence" value="ECO:0007669"/>
    <property type="project" value="UniProtKB-KW"/>
</dbReference>
<dbReference type="GO" id="GO:0051536">
    <property type="term" value="F:iron-sulfur cluster binding"/>
    <property type="evidence" value="ECO:0007669"/>
    <property type="project" value="UniProtKB-KW"/>
</dbReference>
<dbReference type="GO" id="GO:0046872">
    <property type="term" value="F:metal ion binding"/>
    <property type="evidence" value="ECO:0007669"/>
    <property type="project" value="UniProtKB-KW"/>
</dbReference>
<dbReference type="GO" id="GO:0016163">
    <property type="term" value="F:nitrogenase activity"/>
    <property type="evidence" value="ECO:0007669"/>
    <property type="project" value="UniProtKB-EC"/>
</dbReference>
<dbReference type="GO" id="GO:0009399">
    <property type="term" value="P:nitrogen fixation"/>
    <property type="evidence" value="ECO:0007669"/>
    <property type="project" value="UniProtKB-KW"/>
</dbReference>
<dbReference type="CDD" id="cd01976">
    <property type="entry name" value="Nitrogenase_MoFe_alpha"/>
    <property type="match status" value="1"/>
</dbReference>
<dbReference type="Gene3D" id="3.40.50.1980">
    <property type="entry name" value="Nitrogenase molybdenum iron protein domain"/>
    <property type="match status" value="3"/>
</dbReference>
<dbReference type="InterPro" id="IPR000510">
    <property type="entry name" value="Nase/OxRdtase_comp1"/>
</dbReference>
<dbReference type="InterPro" id="IPR010143">
    <property type="entry name" value="Nase_comp1_asu"/>
</dbReference>
<dbReference type="InterPro" id="IPR000318">
    <property type="entry name" value="Nase_comp1_CS"/>
</dbReference>
<dbReference type="InterPro" id="IPR005972">
    <property type="entry name" value="Nase_Mo-Fe_asu"/>
</dbReference>
<dbReference type="NCBIfam" id="TIGR01862">
    <property type="entry name" value="N2-ase-Ialpha"/>
    <property type="match status" value="1"/>
</dbReference>
<dbReference type="NCBIfam" id="TIGR01282">
    <property type="entry name" value="nifD"/>
    <property type="match status" value="1"/>
</dbReference>
<dbReference type="PANTHER" id="PTHR43457">
    <property type="entry name" value="NITROGENASE MOLYBDENUM-IRON PROTEIN ALPHA CHAIN"/>
    <property type="match status" value="1"/>
</dbReference>
<dbReference type="PANTHER" id="PTHR43457:SF1">
    <property type="entry name" value="NITROGENASE MOLYBDENUM-IRON PROTEIN ALPHA CHAIN"/>
    <property type="match status" value="1"/>
</dbReference>
<dbReference type="Pfam" id="PF00148">
    <property type="entry name" value="Oxidored_nitro"/>
    <property type="match status" value="1"/>
</dbReference>
<dbReference type="SUPFAM" id="SSF53807">
    <property type="entry name" value="Helical backbone' metal receptor"/>
    <property type="match status" value="1"/>
</dbReference>
<dbReference type="PROSITE" id="PS00699">
    <property type="entry name" value="NITROGENASE_1_1"/>
    <property type="match status" value="1"/>
</dbReference>
<dbReference type="PROSITE" id="PS00090">
    <property type="entry name" value="NITROGENASE_1_2"/>
    <property type="match status" value="1"/>
</dbReference>
<sequence>MMTNATGERNLALIQEVLEVFPETARKERRKHMMVSDPKMKSVGKCIISNRKSQPGVMTVRGCAYAGSKGVVFGPIKDMAHISHGPAGCGQYSRAERRNYYTGVSGVDSFGTLNFTSDFQERDIVFGGDKKLSKLIEEMELLFPLTKGITIQSECPVGLIGDDISAVANASSKALDKPVIPVRCEGFRGVSQSLGHHIANDVVRDWILNNREGQPFETTPYDVAIIGDYNIGGDAWASRILLEEMGLRVVAQWSGDGTLVEMENTPFVKLNLVHCYRSMNYIARHMEEKHQIPWMEYNFFGPTKIAESLRKIADQFDDTIRANAEAVIARYEGQMAAIIAKYRPRLEGRKVLLYMGGLRPRHVIGAYEDLGMEIIAAGYEFAHNDDYDRTLPDLKEGTLLFDDASSYELEAFVKALKPDLIGSGIKEKYIFQKMGVPFRQMHSWDYSGPYHGYDGFAIFARDMDMTLNNPAWNELTAPWLKSA</sequence>
<organism>
    <name type="scientific">Klebsiella pneumoniae</name>
    <dbReference type="NCBI Taxonomy" id="573"/>
    <lineage>
        <taxon>Bacteria</taxon>
        <taxon>Pseudomonadati</taxon>
        <taxon>Pseudomonadota</taxon>
        <taxon>Gammaproteobacteria</taxon>
        <taxon>Enterobacterales</taxon>
        <taxon>Enterobacteriaceae</taxon>
        <taxon>Klebsiella/Raoultella group</taxon>
        <taxon>Klebsiella</taxon>
        <taxon>Klebsiella pneumoniae complex</taxon>
    </lineage>
</organism>
<name>NIFD_KLEPN</name>